<proteinExistence type="evidence at protein level"/>
<feature type="peptide" id="PRO_0000009008" description="Fibrinopeptide A">
    <location>
        <begin position="1"/>
        <end position="18"/>
    </location>
</feature>
<feature type="non-terminal residue">
    <location>
        <position position="18"/>
    </location>
</feature>
<organism>
    <name type="scientific">Camelus dromedarius</name>
    <name type="common">Dromedary</name>
    <name type="synonym">Arabian camel</name>
    <dbReference type="NCBI Taxonomy" id="9838"/>
    <lineage>
        <taxon>Eukaryota</taxon>
        <taxon>Metazoa</taxon>
        <taxon>Chordata</taxon>
        <taxon>Craniata</taxon>
        <taxon>Vertebrata</taxon>
        <taxon>Euteleostomi</taxon>
        <taxon>Mammalia</taxon>
        <taxon>Eutheria</taxon>
        <taxon>Laurasiatheria</taxon>
        <taxon>Artiodactyla</taxon>
        <taxon>Tylopoda</taxon>
        <taxon>Camelidae</taxon>
        <taxon>Camelus</taxon>
    </lineage>
</organism>
<evidence type="ECO:0000250" key="1">
    <source>
        <dbReference type="UniProtKB" id="E9PV24"/>
    </source>
</evidence>
<evidence type="ECO:0000250" key="2">
    <source>
        <dbReference type="UniProtKB" id="P02671"/>
    </source>
</evidence>
<comment type="function">
    <text evidence="1">Cleaved by the protease thrombin to yield monomers which, together with fibrinogen beta (FGB) and fibrinogen gamma (FGG), polymerize to form an insoluble fibrin matrix. Fibrin has a major function in hemostasis as one of the primary components of blood clots. In addition, functions during the early stages of wound repair to stabilize the lesion and guide cell migration during re-epithelialization. Was originally thought to be essential for platelet aggregation, based on in vitro studies using anticoagulated blood. However, subsequent studies have shown that it is not absolutely required for thrombus formation in vivo. Enhances expression of SELP in activated platelets via an ITGB3-dependent pathway. Maternal fibrinogen is essential for successful pregnancy. Fibrin deposition is also associated with infection, where it protects against IFNG-mediated hemorrhage. May also facilitate the immune response via both innate and T-cell mediated pathways.</text>
</comment>
<comment type="subunit">
    <text evidence="2">Heterohexamer; disulfide linked. Contains 2 sets of 3 non-identical chains (alpha, beta and gamma). The 2 heterotrimers are in head to head conformation with the N-termini in a small central domain (By similarity).</text>
</comment>
<comment type="subcellular location">
    <subcellularLocation>
        <location>Secreted</location>
    </subcellularLocation>
</comment>
<comment type="domain">
    <text evidence="2">A long coiled coil structure formed by 3 polypeptide chains connects the central nodule to the C-terminal domains (distal nodules). The long C-terminal ends of the alpha chains fold back, contributing a fourth strand to the coiled coil structure.</text>
</comment>
<comment type="PTM">
    <text>Conversion of fibrinogen to fibrin is triggered by thrombin, which cleaves fibrinopeptides A and B from alpha and beta chains, and thus exposes the N-terminal polymerization sites responsible for the formation of the soft clot. The soft clot is converted into the hard clot by factor XIIIA which catalyzes the epsilon-(gamma-glutamyl)lysine cross-linking between gamma chains (stronger) and between alpha chains (weaker) of different monomers.</text>
</comment>
<comment type="PTM">
    <text>Forms F13A-mediated cross-links between a glutamine and the epsilon-amino group of a lysine residue, forming fibronectin-fibrinogen heteropolymers.</text>
</comment>
<keyword id="KW-1064">Adaptive immunity</keyword>
<keyword id="KW-0094">Blood coagulation</keyword>
<keyword id="KW-0175">Coiled coil</keyword>
<keyword id="KW-0903">Direct protein sequencing</keyword>
<keyword id="KW-1015">Disulfide bond</keyword>
<keyword id="KW-0356">Hemostasis</keyword>
<keyword id="KW-0391">Immunity</keyword>
<keyword id="KW-0399">Innate immunity</keyword>
<keyword id="KW-0964">Secreted</keyword>
<gene>
    <name type="primary">FGA</name>
</gene>
<reference key="1">
    <citation type="journal article" date="1967" name="Arch. Biochem. Biophys.">
        <title>Amino acid sequence studies on artiodactyl fibrinopeptides. I. Dromedary camel, mule deer, and cape buffalo.</title>
        <authorList>
            <person name="Doolittle R.F."/>
            <person name="Schubert D."/>
            <person name="Schwartz S.A."/>
        </authorList>
    </citation>
    <scope>PROTEIN SEQUENCE</scope>
</reference>
<dbReference type="STRING" id="9838.ENSCDRP00005023171"/>
<dbReference type="GO" id="GO:0005576">
    <property type="term" value="C:extracellular region"/>
    <property type="evidence" value="ECO:0007669"/>
    <property type="project" value="UniProtKB-SubCell"/>
</dbReference>
<dbReference type="GO" id="GO:0002250">
    <property type="term" value="P:adaptive immune response"/>
    <property type="evidence" value="ECO:0007669"/>
    <property type="project" value="UniProtKB-KW"/>
</dbReference>
<dbReference type="GO" id="GO:0007596">
    <property type="term" value="P:blood coagulation"/>
    <property type="evidence" value="ECO:0007669"/>
    <property type="project" value="UniProtKB-KW"/>
</dbReference>
<dbReference type="GO" id="GO:0045087">
    <property type="term" value="P:innate immune response"/>
    <property type="evidence" value="ECO:0007669"/>
    <property type="project" value="UniProtKB-KW"/>
</dbReference>
<sequence length="18" mass="1835">TDPDADEGEFLAEGGGVR</sequence>
<name>FIBA_CAMDR</name>
<accession>P14444</accession>
<protein>
    <recommendedName>
        <fullName>Fibrinogen alpha chain</fullName>
    </recommendedName>
    <component>
        <recommendedName>
            <fullName>Fibrinopeptide A</fullName>
        </recommendedName>
    </component>
</protein>